<reference key="1">
    <citation type="submission" date="2008-12" db="EMBL/GenBank/DDBJ databases">
        <title>Complete sequence of chromosome of Methylobacterium chloromethanicum CM4.</title>
        <authorList>
            <consortium name="US DOE Joint Genome Institute"/>
            <person name="Lucas S."/>
            <person name="Copeland A."/>
            <person name="Lapidus A."/>
            <person name="Glavina del Rio T."/>
            <person name="Dalin E."/>
            <person name="Tice H."/>
            <person name="Bruce D."/>
            <person name="Goodwin L."/>
            <person name="Pitluck S."/>
            <person name="Chertkov O."/>
            <person name="Brettin T."/>
            <person name="Detter J.C."/>
            <person name="Han C."/>
            <person name="Larimer F."/>
            <person name="Land M."/>
            <person name="Hauser L."/>
            <person name="Kyrpides N."/>
            <person name="Mikhailova N."/>
            <person name="Marx C."/>
            <person name="Richardson P."/>
        </authorList>
    </citation>
    <scope>NUCLEOTIDE SEQUENCE [LARGE SCALE GENOMIC DNA]</scope>
    <source>
        <strain>CM4 / NCIMB 13688</strain>
    </source>
</reference>
<evidence type="ECO:0000255" key="1">
    <source>
        <dbReference type="HAMAP-Rule" id="MF_01216"/>
    </source>
</evidence>
<accession>B7KYE7</accession>
<keyword id="KW-0285">Flavoprotein</keyword>
<keyword id="KW-0288">FMN</keyword>
<keyword id="KW-0520">NAD</keyword>
<keyword id="KW-0560">Oxidoreductase</keyword>
<comment type="function">
    <text evidence="1">Quinone reductase that provides resistance to thiol-specific stress caused by electrophilic quinones.</text>
</comment>
<comment type="function">
    <text evidence="1">Also exhibits azoreductase activity. Catalyzes the reductive cleavage of the azo bond in aromatic azo compounds to the corresponding amines.</text>
</comment>
<comment type="catalytic activity">
    <reaction evidence="1">
        <text>2 a quinone + NADH + H(+) = 2 a 1,4-benzosemiquinone + NAD(+)</text>
        <dbReference type="Rhea" id="RHEA:65952"/>
        <dbReference type="ChEBI" id="CHEBI:15378"/>
        <dbReference type="ChEBI" id="CHEBI:57540"/>
        <dbReference type="ChEBI" id="CHEBI:57945"/>
        <dbReference type="ChEBI" id="CHEBI:132124"/>
        <dbReference type="ChEBI" id="CHEBI:134225"/>
    </reaction>
</comment>
<comment type="catalytic activity">
    <reaction evidence="1">
        <text>N,N-dimethyl-1,4-phenylenediamine + anthranilate + 2 NAD(+) = 2-(4-dimethylaminophenyl)diazenylbenzoate + 2 NADH + 2 H(+)</text>
        <dbReference type="Rhea" id="RHEA:55872"/>
        <dbReference type="ChEBI" id="CHEBI:15378"/>
        <dbReference type="ChEBI" id="CHEBI:15783"/>
        <dbReference type="ChEBI" id="CHEBI:16567"/>
        <dbReference type="ChEBI" id="CHEBI:57540"/>
        <dbReference type="ChEBI" id="CHEBI:57945"/>
        <dbReference type="ChEBI" id="CHEBI:71579"/>
        <dbReference type="EC" id="1.7.1.17"/>
    </reaction>
</comment>
<comment type="cofactor">
    <cofactor evidence="1">
        <name>FMN</name>
        <dbReference type="ChEBI" id="CHEBI:58210"/>
    </cofactor>
    <text evidence="1">Binds 1 FMN per subunit.</text>
</comment>
<comment type="subunit">
    <text evidence="1">Homodimer.</text>
</comment>
<comment type="similarity">
    <text evidence="1">Belongs to the azoreductase type 1 family.</text>
</comment>
<protein>
    <recommendedName>
        <fullName evidence="1">FMN-dependent NADH:quinone oxidoreductase</fullName>
        <ecNumber evidence="1">1.6.5.-</ecNumber>
    </recommendedName>
    <alternativeName>
        <fullName evidence="1">Azo-dye reductase</fullName>
    </alternativeName>
    <alternativeName>
        <fullName evidence="1">FMN-dependent NADH-azo compound oxidoreductase</fullName>
    </alternativeName>
    <alternativeName>
        <fullName evidence="1">FMN-dependent NADH-azoreductase</fullName>
        <ecNumber evidence="1">1.7.1.17</ecNumber>
    </alternativeName>
</protein>
<name>AZOR_METC4</name>
<sequence>MKLLHVDGSILGPHSVSRTVSAAIVDRLRAQHPGLEVIYRDLAGTPLPHLSGAVLAGAQPNATNTPDVQHDVELGRQVLEEFLAADIVVIGAPLYNFTLSSQLKAWIDRILVAGVTFRYGPTGAEGLAGGKRVIAVVSRGGLYGPGTPAAAAEHAETYLRTVLAFIGITAPEIIVAEGIALGAEARERALAGALDAAAALKAA</sequence>
<proteinExistence type="inferred from homology"/>
<organism>
    <name type="scientific">Methylorubrum extorquens (strain CM4 / NCIMB 13688)</name>
    <name type="common">Methylobacterium extorquens</name>
    <dbReference type="NCBI Taxonomy" id="440085"/>
    <lineage>
        <taxon>Bacteria</taxon>
        <taxon>Pseudomonadati</taxon>
        <taxon>Pseudomonadota</taxon>
        <taxon>Alphaproteobacteria</taxon>
        <taxon>Hyphomicrobiales</taxon>
        <taxon>Methylobacteriaceae</taxon>
        <taxon>Methylorubrum</taxon>
    </lineage>
</organism>
<gene>
    <name evidence="1" type="primary">azoR</name>
    <name type="ordered locus">Mchl_2310</name>
</gene>
<dbReference type="EC" id="1.6.5.-" evidence="1"/>
<dbReference type="EC" id="1.7.1.17" evidence="1"/>
<dbReference type="EMBL" id="CP001298">
    <property type="protein sequence ID" value="ACK83156.1"/>
    <property type="molecule type" value="Genomic_DNA"/>
</dbReference>
<dbReference type="RefSeq" id="WP_015950796.1">
    <property type="nucleotide sequence ID" value="NC_011757.1"/>
</dbReference>
<dbReference type="SMR" id="B7KYE7"/>
<dbReference type="KEGG" id="mch:Mchl_2310"/>
<dbReference type="HOGENOM" id="CLU_088964_0_0_5"/>
<dbReference type="Proteomes" id="UP000002385">
    <property type="component" value="Chromosome"/>
</dbReference>
<dbReference type="GO" id="GO:0009055">
    <property type="term" value="F:electron transfer activity"/>
    <property type="evidence" value="ECO:0007669"/>
    <property type="project" value="UniProtKB-UniRule"/>
</dbReference>
<dbReference type="GO" id="GO:0010181">
    <property type="term" value="F:FMN binding"/>
    <property type="evidence" value="ECO:0007669"/>
    <property type="project" value="UniProtKB-UniRule"/>
</dbReference>
<dbReference type="GO" id="GO:0016652">
    <property type="term" value="F:oxidoreductase activity, acting on NAD(P)H as acceptor"/>
    <property type="evidence" value="ECO:0007669"/>
    <property type="project" value="UniProtKB-UniRule"/>
</dbReference>
<dbReference type="GO" id="GO:0016655">
    <property type="term" value="F:oxidoreductase activity, acting on NAD(P)H, quinone or similar compound as acceptor"/>
    <property type="evidence" value="ECO:0007669"/>
    <property type="project" value="InterPro"/>
</dbReference>
<dbReference type="Gene3D" id="3.40.50.360">
    <property type="match status" value="1"/>
</dbReference>
<dbReference type="HAMAP" id="MF_01216">
    <property type="entry name" value="Azoreductase_type1"/>
    <property type="match status" value="1"/>
</dbReference>
<dbReference type="InterPro" id="IPR003680">
    <property type="entry name" value="Flavodoxin_fold"/>
</dbReference>
<dbReference type="InterPro" id="IPR029039">
    <property type="entry name" value="Flavoprotein-like_sf"/>
</dbReference>
<dbReference type="InterPro" id="IPR050104">
    <property type="entry name" value="FMN-dep_NADH:Q_OxRdtase_AzoR1"/>
</dbReference>
<dbReference type="InterPro" id="IPR023048">
    <property type="entry name" value="NADH:quinone_OxRdtase_FMN_depd"/>
</dbReference>
<dbReference type="PANTHER" id="PTHR43741">
    <property type="entry name" value="FMN-DEPENDENT NADH-AZOREDUCTASE 1"/>
    <property type="match status" value="1"/>
</dbReference>
<dbReference type="PANTHER" id="PTHR43741:SF4">
    <property type="entry name" value="FMN-DEPENDENT NADH:QUINONE OXIDOREDUCTASE"/>
    <property type="match status" value="1"/>
</dbReference>
<dbReference type="Pfam" id="PF02525">
    <property type="entry name" value="Flavodoxin_2"/>
    <property type="match status" value="1"/>
</dbReference>
<dbReference type="SUPFAM" id="SSF52218">
    <property type="entry name" value="Flavoproteins"/>
    <property type="match status" value="1"/>
</dbReference>
<feature type="chain" id="PRO_1000164759" description="FMN-dependent NADH:quinone oxidoreductase">
    <location>
        <begin position="1"/>
        <end position="203"/>
    </location>
</feature>
<feature type="binding site" evidence="1">
    <location>
        <position position="9"/>
    </location>
    <ligand>
        <name>FMN</name>
        <dbReference type="ChEBI" id="CHEBI:58210"/>
    </ligand>
</feature>
<feature type="binding site" evidence="1">
    <location>
        <begin position="15"/>
        <end position="17"/>
    </location>
    <ligand>
        <name>FMN</name>
        <dbReference type="ChEBI" id="CHEBI:58210"/>
    </ligand>
</feature>
<feature type="binding site" evidence="1">
    <location>
        <begin position="138"/>
        <end position="141"/>
    </location>
    <ligand>
        <name>FMN</name>
        <dbReference type="ChEBI" id="CHEBI:58210"/>
    </ligand>
</feature>